<keyword id="KW-0238">DNA-binding</keyword>
<keyword id="KW-1185">Reference proteome</keyword>
<keyword id="KW-0804">Transcription</keyword>
<keyword id="KW-0805">Transcription regulation</keyword>
<sequence>MMTRKPTSVGEILQEEFLEPLSLKISDLAQILDVHRNTASNIVNNSSRITLEMAVKLAKVFDTTPEFWLNLQTRIDLWDLEHNKRFQQSLANVKPALHRHDTSTFAM</sequence>
<evidence type="ECO:0000255" key="1">
    <source>
        <dbReference type="PROSITE-ProRule" id="PRU00257"/>
    </source>
</evidence>
<evidence type="ECO:0000305" key="2"/>
<protein>
    <recommendedName>
        <fullName>Uncharacterized HTH-type transcriptional regulator HI_1251</fullName>
    </recommendedName>
</protein>
<proteinExistence type="inferred from homology"/>
<organism>
    <name type="scientific">Haemophilus influenzae (strain ATCC 51907 / DSM 11121 / KW20 / Rd)</name>
    <dbReference type="NCBI Taxonomy" id="71421"/>
    <lineage>
        <taxon>Bacteria</taxon>
        <taxon>Pseudomonadati</taxon>
        <taxon>Pseudomonadota</taxon>
        <taxon>Gammaproteobacteria</taxon>
        <taxon>Pasteurellales</taxon>
        <taxon>Pasteurellaceae</taxon>
        <taxon>Haemophilus</taxon>
    </lineage>
</organism>
<name>Y1251_HAEIN</name>
<accession>Q57089</accession>
<accession>O05048</accession>
<reference key="1">
    <citation type="journal article" date="1995" name="Science">
        <title>Whole-genome random sequencing and assembly of Haemophilus influenzae Rd.</title>
        <authorList>
            <person name="Fleischmann R.D."/>
            <person name="Adams M.D."/>
            <person name="White O."/>
            <person name="Clayton R.A."/>
            <person name="Kirkness E.F."/>
            <person name="Kerlavage A.R."/>
            <person name="Bult C.J."/>
            <person name="Tomb J.-F."/>
            <person name="Dougherty B.A."/>
            <person name="Merrick J.M."/>
            <person name="McKenney K."/>
            <person name="Sutton G.G."/>
            <person name="FitzHugh W."/>
            <person name="Fields C.A."/>
            <person name="Gocayne J.D."/>
            <person name="Scott J.D."/>
            <person name="Shirley R."/>
            <person name="Liu L.-I."/>
            <person name="Glodek A."/>
            <person name="Kelley J.M."/>
            <person name="Weidman J.F."/>
            <person name="Phillips C.A."/>
            <person name="Spriggs T."/>
            <person name="Hedblom E."/>
            <person name="Cotton M.D."/>
            <person name="Utterback T.R."/>
            <person name="Hanna M.C."/>
            <person name="Nguyen D.T."/>
            <person name="Saudek D.M."/>
            <person name="Brandon R.C."/>
            <person name="Fine L.D."/>
            <person name="Fritchman J.L."/>
            <person name="Fuhrmann J.L."/>
            <person name="Geoghagen N.S.M."/>
            <person name="Gnehm C.L."/>
            <person name="McDonald L.A."/>
            <person name="Small K.V."/>
            <person name="Fraser C.M."/>
            <person name="Smith H.O."/>
            <person name="Venter J.C."/>
        </authorList>
    </citation>
    <scope>NUCLEOTIDE SEQUENCE [LARGE SCALE GENOMIC DNA]</scope>
    <source>
        <strain>ATCC 51907 / DSM 11121 / KW20 / Rd</strain>
    </source>
</reference>
<comment type="similarity">
    <text evidence="2">Belongs to the VapA/VapI family.</text>
</comment>
<gene>
    <name type="ordered locus">HI_1251</name>
</gene>
<dbReference type="EMBL" id="L42023">
    <property type="protein sequence ID" value="AAC22901.1"/>
    <property type="molecule type" value="Genomic_DNA"/>
</dbReference>
<dbReference type="PIR" id="H64112">
    <property type="entry name" value="H64112"/>
</dbReference>
<dbReference type="RefSeq" id="NP_439407.1">
    <property type="nucleotide sequence ID" value="NC_000907.1"/>
</dbReference>
<dbReference type="SMR" id="Q57089"/>
<dbReference type="STRING" id="71421.HI_1251"/>
<dbReference type="EnsemblBacteria" id="AAC22901">
    <property type="protein sequence ID" value="AAC22901"/>
    <property type="gene ID" value="HI_1251"/>
</dbReference>
<dbReference type="KEGG" id="hin:HI_1251"/>
<dbReference type="PATRIC" id="fig|71421.8.peg.1303"/>
<dbReference type="eggNOG" id="COG3093">
    <property type="taxonomic scope" value="Bacteria"/>
</dbReference>
<dbReference type="HOGENOM" id="CLU_140230_3_2_6"/>
<dbReference type="OrthoDB" id="9793869at2"/>
<dbReference type="PhylomeDB" id="Q57089"/>
<dbReference type="BioCyc" id="HINF71421:G1GJ1-1282-MONOMER"/>
<dbReference type="Proteomes" id="UP000000579">
    <property type="component" value="Chromosome"/>
</dbReference>
<dbReference type="GO" id="GO:0003677">
    <property type="term" value="F:DNA binding"/>
    <property type="evidence" value="ECO:0007669"/>
    <property type="project" value="UniProtKB-KW"/>
</dbReference>
<dbReference type="CDD" id="cd00093">
    <property type="entry name" value="HTH_XRE"/>
    <property type="match status" value="1"/>
</dbReference>
<dbReference type="Gene3D" id="1.10.260.40">
    <property type="entry name" value="lambda repressor-like DNA-binding domains"/>
    <property type="match status" value="1"/>
</dbReference>
<dbReference type="InterPro" id="IPR001387">
    <property type="entry name" value="Cro/C1-type_HTH"/>
</dbReference>
<dbReference type="InterPro" id="IPR010982">
    <property type="entry name" value="Lambda_DNA-bd_dom_sf"/>
</dbReference>
<dbReference type="InterPro" id="IPR013430">
    <property type="entry name" value="Toxin_antidote_HigA"/>
</dbReference>
<dbReference type="NCBIfam" id="TIGR02607">
    <property type="entry name" value="antidote_HigA"/>
    <property type="match status" value="1"/>
</dbReference>
<dbReference type="PANTHER" id="PTHR36924">
    <property type="entry name" value="ANTITOXIN HIGA-1"/>
    <property type="match status" value="1"/>
</dbReference>
<dbReference type="PANTHER" id="PTHR36924:SF1">
    <property type="entry name" value="ANTITOXIN HIGA-1"/>
    <property type="match status" value="1"/>
</dbReference>
<dbReference type="Pfam" id="PF01381">
    <property type="entry name" value="HTH_3"/>
    <property type="match status" value="1"/>
</dbReference>
<dbReference type="SMART" id="SM00530">
    <property type="entry name" value="HTH_XRE"/>
    <property type="match status" value="1"/>
</dbReference>
<dbReference type="SUPFAM" id="SSF47413">
    <property type="entry name" value="lambda repressor-like DNA-binding domains"/>
    <property type="match status" value="1"/>
</dbReference>
<dbReference type="PROSITE" id="PS50943">
    <property type="entry name" value="HTH_CROC1"/>
    <property type="match status" value="1"/>
</dbReference>
<feature type="chain" id="PRO_0000149755" description="Uncharacterized HTH-type transcriptional regulator HI_1251">
    <location>
        <begin position="1"/>
        <end position="107"/>
    </location>
</feature>
<feature type="domain" description="HTH cro/C1-type" evidence="1">
    <location>
        <begin position="13"/>
        <end position="68"/>
    </location>
</feature>
<feature type="DNA-binding region" description="H-T-H motif" evidence="1">
    <location>
        <begin position="24"/>
        <end position="43"/>
    </location>
</feature>